<feature type="chain" id="PRO_0000141366" description="Aspartate-semialdehyde dehydrogenase">
    <location>
        <begin position="1"/>
        <end position="343"/>
    </location>
</feature>
<feature type="active site" description="Acyl-thioester intermediate" evidence="1">
    <location>
        <position position="134"/>
    </location>
</feature>
<feature type="active site" description="Proton acceptor" evidence="1">
    <location>
        <position position="248"/>
    </location>
</feature>
<feature type="binding site" evidence="1">
    <location>
        <begin position="13"/>
        <end position="16"/>
    </location>
    <ligand>
        <name>NADP(+)</name>
        <dbReference type="ChEBI" id="CHEBI:58349"/>
    </ligand>
</feature>
<feature type="binding site" evidence="1">
    <location>
        <begin position="41"/>
        <end position="42"/>
    </location>
    <ligand>
        <name>NADP(+)</name>
        <dbReference type="ChEBI" id="CHEBI:58349"/>
    </ligand>
</feature>
<feature type="binding site" evidence="1">
    <location>
        <position position="103"/>
    </location>
    <ligand>
        <name>phosphate</name>
        <dbReference type="ChEBI" id="CHEBI:43474"/>
    </ligand>
</feature>
<feature type="binding site" evidence="1">
    <location>
        <position position="161"/>
    </location>
    <ligand>
        <name>substrate</name>
    </ligand>
</feature>
<feature type="binding site" evidence="1">
    <location>
        <begin position="164"/>
        <end position="165"/>
    </location>
    <ligand>
        <name>NADP(+)</name>
        <dbReference type="ChEBI" id="CHEBI:58349"/>
    </ligand>
</feature>
<feature type="binding site" evidence="1">
    <location>
        <position position="220"/>
    </location>
    <ligand>
        <name>phosphate</name>
        <dbReference type="ChEBI" id="CHEBI:43474"/>
    </ligand>
</feature>
<feature type="binding site" evidence="1">
    <location>
        <position position="241"/>
    </location>
    <ligand>
        <name>substrate</name>
    </ligand>
</feature>
<feature type="binding site" evidence="1">
    <location>
        <position position="321"/>
    </location>
    <ligand>
        <name>NADP(+)</name>
        <dbReference type="ChEBI" id="CHEBI:58349"/>
    </ligand>
</feature>
<feature type="sequence conflict" description="In Ref. 1." evidence="2" ref="1">
    <original>VGSEVEFKGKAYKV</original>
    <variation>AGNQIEFRGKSYTI</variation>
    <location>
        <begin position="43"/>
        <end position="56"/>
    </location>
</feature>
<feature type="sequence conflict" description="In Ref. 1; CAA66607." evidence="2" ref="1">
    <original>NVFK</original>
    <variation>DAFR</variation>
    <location>
        <begin position="62"/>
        <end position="65"/>
    </location>
</feature>
<feature type="sequence conflict" description="In Ref. 1; CAA66607." evidence="2" ref="1">
    <original>I</original>
    <variation>V</variation>
    <location>
        <position position="69"/>
    </location>
</feature>
<feature type="sequence conflict" description="In Ref. 1; CAA66607." evidence="2" ref="1">
    <original>S</original>
    <variation>A</variation>
    <location>
        <position position="91"/>
    </location>
</feature>
<feature type="sequence conflict" description="In Ref. 1; CAA66607." evidence="2" ref="1">
    <original>K</original>
    <variation>E</variation>
    <location>
        <position position="106"/>
    </location>
</feature>
<feature type="sequence conflict" description="In Ref. 1; CAA66607." evidence="2" ref="1">
    <original>D</original>
    <variation>E</variation>
    <location>
        <position position="122"/>
    </location>
</feature>
<feature type="sequence conflict" description="In Ref. 1; CAA66607." evidence="2" ref="1">
    <original>QV</original>
    <variation>HI</variation>
    <location>
        <begin position="141"/>
        <end position="142"/>
    </location>
</feature>
<feature type="sequence conflict" description="In Ref. 1; CAA66607." evidence="2" ref="1">
    <original>N</original>
    <variation>D</variation>
    <location>
        <position position="151"/>
    </location>
</feature>
<feature type="sequence conflict" description="In Ref. 1; CAA66607." evidence="2" ref="1">
    <original>Q</original>
    <variation>E</variation>
    <location>
        <position position="172"/>
    </location>
</feature>
<feature type="sequence conflict" description="In Ref. 1; CAA66607." evidence="2" ref="1">
    <original>E</original>
    <variation>R</variation>
    <location>
        <position position="176"/>
    </location>
</feature>
<feature type="sequence conflict" description="In Ref. 1; CAA66607." evidence="2" ref="1">
    <original>P</original>
    <variation>A</variation>
    <location>
        <position position="191"/>
    </location>
</feature>
<feature type="sequence conflict" description="In Ref. 1; CAA66607." evidence="2" ref="1">
    <original>Y</original>
    <variation>H</variation>
    <location>
        <position position="196"/>
    </location>
</feature>
<feature type="sequence conflict" description="In Ref. 1; CAA66607." evidence="2" ref="1">
    <original>D</original>
    <variation>G</variation>
    <location>
        <position position="213"/>
    </location>
</feature>
<feature type="sequence conflict" description="In Ref. 1; CAA66607." evidence="2" ref="1">
    <original>V</original>
    <variation>I</variation>
    <location>
        <position position="222"/>
    </location>
</feature>
<feature type="sequence conflict" description="In Ref. 1; CAA66607." evidence="2" ref="1">
    <original>V</original>
    <variation>I</variation>
    <location>
        <position position="235"/>
    </location>
</feature>
<feature type="sequence conflict" description="In Ref. 1; CAA66607." evidence="2" ref="1">
    <original>E</original>
    <variation>A</variation>
    <location>
        <position position="257"/>
    </location>
</feature>
<feature type="sequence conflict" description="In Ref. 1; CAA66607." evidence="2" ref="1">
    <original>I</original>
    <variation>V</variation>
    <location>
        <position position="260"/>
    </location>
</feature>
<feature type="sequence conflict" description="In Ref. 1; CAA66607." evidence="2" ref="1">
    <original>K</original>
    <variation>N</variation>
    <location>
        <position position="263"/>
    </location>
</feature>
<feature type="sequence conflict" description="In Ref. 1; CAA66607." evidence="2" ref="1">
    <original>KE</original>
    <variation>RD</variation>
    <location>
        <begin position="266"/>
        <end position="267"/>
    </location>
</feature>
<feature type="sequence conflict" description="In Ref. 1; CAA66607." evidence="2" ref="1">
    <original>KK</original>
    <variation>QN</variation>
    <location>
        <begin position="270"/>
        <end position="271"/>
    </location>
</feature>
<feature type="sequence conflict" description="In Ref. 1; CAA66607." evidence="2" ref="1">
    <original>I</original>
    <variation>V</variation>
    <location>
        <position position="276"/>
    </location>
</feature>
<feature type="sequence conflict" description="In Ref. 1; CAA66607." evidence="2" ref="1">
    <original>D</original>
    <variation>E</variation>
    <location>
        <position position="280"/>
    </location>
</feature>
<feature type="sequence conflict" description="In Ref. 1; CAA66607." evidence="2" ref="1">
    <original>N</original>
    <variation>D</variation>
    <location>
        <position position="283"/>
    </location>
</feature>
<feature type="sequence conflict" description="In Ref. 1; CAA66607." evidence="2" ref="1">
    <original>A</original>
    <variation>L</variation>
    <location>
        <position position="305"/>
    </location>
</feature>
<feature type="sequence conflict" description="In Ref. 1; CAA66607." evidence="2" ref="1">
    <original>YDKK</original>
    <variation>THKN</variation>
    <location>
        <begin position="308"/>
        <end position="311"/>
    </location>
</feature>
<feature type="sequence conflict" description="In Ref. 1; CAA66607." evidence="2" ref="1">
    <original>K</original>
    <variation>E</variation>
    <location>
        <position position="341"/>
    </location>
</feature>
<sequence length="343" mass="38375">MSKKQKIAIVGATGAVGEELLNVLDELDFPVESILPLASAKSVGSEVEFKGKAYKVKELTENVFKENPIDIAFFSAGGSVSEKYAKFAVESGAVVIDNTSHFRMEKDVPLVVPECNPEDIKDWKKTGIIANPNCSTIQMVQVLKPLNDAFNLKRVDVSTYQAASGAGKEGMQELVEAMQSFFAFKLDEFEPQTFPYTLALNLIPQIDVFMDNDYTKEELKMVNETQKILHKNLEVSATCVRVPVLRSHSEAITMHFEKEIDVKKAKEILKKAPSVIVIDDPKNKKYPMPLMTSDTNETYVGRIRADVYDKKILHLWCVADQIRVGAATNAVRIAQKWLELKNK</sequence>
<reference key="1">
    <citation type="journal article" date="1996" name="Acta Microbiol. Pol.">
        <title>Complete nucleotide sequence of the Campylobacter jejuni 72Dz asd gene.</title>
        <authorList>
            <person name="Pawelec D."/>
            <person name="Jagusztyn-Krynicka E.K."/>
        </authorList>
    </citation>
    <scope>NUCLEOTIDE SEQUENCE [GENOMIC DNA]</scope>
    <source>
        <strain>DZ72/92</strain>
    </source>
</reference>
<reference key="2">
    <citation type="journal article" date="2000" name="Nature">
        <title>The genome sequence of the food-borne pathogen Campylobacter jejuni reveals hypervariable sequences.</title>
        <authorList>
            <person name="Parkhill J."/>
            <person name="Wren B.W."/>
            <person name="Mungall K.L."/>
            <person name="Ketley J.M."/>
            <person name="Churcher C.M."/>
            <person name="Basham D."/>
            <person name="Chillingworth T."/>
            <person name="Davies R.M."/>
            <person name="Feltwell T."/>
            <person name="Holroyd S."/>
            <person name="Jagels K."/>
            <person name="Karlyshev A.V."/>
            <person name="Moule S."/>
            <person name="Pallen M.J."/>
            <person name="Penn C.W."/>
            <person name="Quail M.A."/>
            <person name="Rajandream M.A."/>
            <person name="Rutherford K.M."/>
            <person name="van Vliet A.H.M."/>
            <person name="Whitehead S."/>
            <person name="Barrell B.G."/>
        </authorList>
    </citation>
    <scope>NUCLEOTIDE SEQUENCE [LARGE SCALE GENOMIC DNA]</scope>
    <source>
        <strain>ATCC 700819 / NCTC 11168</strain>
    </source>
</reference>
<organism>
    <name type="scientific">Campylobacter jejuni subsp. jejuni serotype O:2 (strain ATCC 700819 / NCTC 11168)</name>
    <dbReference type="NCBI Taxonomy" id="192222"/>
    <lineage>
        <taxon>Bacteria</taxon>
        <taxon>Pseudomonadati</taxon>
        <taxon>Campylobacterota</taxon>
        <taxon>Epsilonproteobacteria</taxon>
        <taxon>Campylobacterales</taxon>
        <taxon>Campylobacteraceae</taxon>
        <taxon>Campylobacter</taxon>
    </lineage>
</organism>
<proteinExistence type="inferred from homology"/>
<accession>Q59291</accession>
<accession>Q0P9M9</accession>
<accession>Q9PNR7</accession>
<name>DHAS_CAMJE</name>
<dbReference type="EC" id="1.2.1.11" evidence="1"/>
<dbReference type="EMBL" id="X97964">
    <property type="protein sequence ID" value="CAA66607.1"/>
    <property type="molecule type" value="Genomic_DNA"/>
</dbReference>
<dbReference type="EMBL" id="AL111168">
    <property type="protein sequence ID" value="CAL35141.1"/>
    <property type="molecule type" value="Genomic_DNA"/>
</dbReference>
<dbReference type="PIR" id="D81304">
    <property type="entry name" value="D81304"/>
</dbReference>
<dbReference type="RefSeq" id="WP_002852931.1">
    <property type="nucleotide sequence ID" value="NZ_SZUC01000001.1"/>
</dbReference>
<dbReference type="RefSeq" id="YP_002344418.1">
    <property type="nucleotide sequence ID" value="NC_002163.1"/>
</dbReference>
<dbReference type="SMR" id="Q59291"/>
<dbReference type="IntAct" id="Q59291">
    <property type="interactions" value="61"/>
</dbReference>
<dbReference type="STRING" id="192222.Cj1023c"/>
<dbReference type="PaxDb" id="192222-Cj1023c"/>
<dbReference type="EnsemblBacteria" id="CAL35141">
    <property type="protein sequence ID" value="CAL35141"/>
    <property type="gene ID" value="Cj1023c"/>
</dbReference>
<dbReference type="GeneID" id="905315"/>
<dbReference type="KEGG" id="cje:Cj1023c"/>
<dbReference type="PATRIC" id="fig|192222.6.peg.1005"/>
<dbReference type="eggNOG" id="COG0136">
    <property type="taxonomic scope" value="Bacteria"/>
</dbReference>
<dbReference type="HOGENOM" id="CLU_049966_0_1_7"/>
<dbReference type="OrthoDB" id="9805684at2"/>
<dbReference type="UniPathway" id="UPA00034">
    <property type="reaction ID" value="UER00016"/>
</dbReference>
<dbReference type="UniPathway" id="UPA00050">
    <property type="reaction ID" value="UER00463"/>
</dbReference>
<dbReference type="UniPathway" id="UPA00051">
    <property type="reaction ID" value="UER00464"/>
</dbReference>
<dbReference type="Proteomes" id="UP000000799">
    <property type="component" value="Chromosome"/>
</dbReference>
<dbReference type="GO" id="GO:0004073">
    <property type="term" value="F:aspartate-semialdehyde dehydrogenase activity"/>
    <property type="evidence" value="ECO:0007669"/>
    <property type="project" value="UniProtKB-UniRule"/>
</dbReference>
<dbReference type="GO" id="GO:0051287">
    <property type="term" value="F:NAD binding"/>
    <property type="evidence" value="ECO:0007669"/>
    <property type="project" value="InterPro"/>
</dbReference>
<dbReference type="GO" id="GO:0050661">
    <property type="term" value="F:NADP binding"/>
    <property type="evidence" value="ECO:0007669"/>
    <property type="project" value="UniProtKB-UniRule"/>
</dbReference>
<dbReference type="GO" id="GO:0046983">
    <property type="term" value="F:protein dimerization activity"/>
    <property type="evidence" value="ECO:0007669"/>
    <property type="project" value="InterPro"/>
</dbReference>
<dbReference type="GO" id="GO:0071266">
    <property type="term" value="P:'de novo' L-methionine biosynthetic process"/>
    <property type="evidence" value="ECO:0007669"/>
    <property type="project" value="UniProtKB-UniRule"/>
</dbReference>
<dbReference type="GO" id="GO:0019877">
    <property type="term" value="P:diaminopimelate biosynthetic process"/>
    <property type="evidence" value="ECO:0007669"/>
    <property type="project" value="UniProtKB-UniRule"/>
</dbReference>
<dbReference type="GO" id="GO:0009097">
    <property type="term" value="P:isoleucine biosynthetic process"/>
    <property type="evidence" value="ECO:0007669"/>
    <property type="project" value="InterPro"/>
</dbReference>
<dbReference type="GO" id="GO:0009089">
    <property type="term" value="P:lysine biosynthetic process via diaminopimelate"/>
    <property type="evidence" value="ECO:0007669"/>
    <property type="project" value="UniProtKB-UniRule"/>
</dbReference>
<dbReference type="GO" id="GO:0009088">
    <property type="term" value="P:threonine biosynthetic process"/>
    <property type="evidence" value="ECO:0007669"/>
    <property type="project" value="UniProtKB-UniRule"/>
</dbReference>
<dbReference type="CDD" id="cd18131">
    <property type="entry name" value="ASADH_C_bac_euk_like"/>
    <property type="match status" value="1"/>
</dbReference>
<dbReference type="CDD" id="cd02316">
    <property type="entry name" value="VcASADH2_like_N"/>
    <property type="match status" value="1"/>
</dbReference>
<dbReference type="Gene3D" id="3.30.360.10">
    <property type="entry name" value="Dihydrodipicolinate Reductase, domain 2"/>
    <property type="match status" value="1"/>
</dbReference>
<dbReference type="Gene3D" id="3.40.50.720">
    <property type="entry name" value="NAD(P)-binding Rossmann-like Domain"/>
    <property type="match status" value="1"/>
</dbReference>
<dbReference type="HAMAP" id="MF_02121">
    <property type="entry name" value="ASADH"/>
    <property type="match status" value="1"/>
</dbReference>
<dbReference type="InterPro" id="IPR000319">
    <property type="entry name" value="Asp-semialdehyde_DH_CS"/>
</dbReference>
<dbReference type="InterPro" id="IPR012080">
    <property type="entry name" value="Asp_semialdehyde_DH"/>
</dbReference>
<dbReference type="InterPro" id="IPR005986">
    <property type="entry name" value="Asp_semialdehyde_DH_beta"/>
</dbReference>
<dbReference type="InterPro" id="IPR036291">
    <property type="entry name" value="NAD(P)-bd_dom_sf"/>
</dbReference>
<dbReference type="InterPro" id="IPR000534">
    <property type="entry name" value="Semialdehyde_DH_NAD-bd"/>
</dbReference>
<dbReference type="InterPro" id="IPR012280">
    <property type="entry name" value="Semialdhyde_DH_dimer_dom"/>
</dbReference>
<dbReference type="NCBIfam" id="TIGR01296">
    <property type="entry name" value="asd_B"/>
    <property type="match status" value="1"/>
</dbReference>
<dbReference type="NCBIfam" id="NF011456">
    <property type="entry name" value="PRK14874.1"/>
    <property type="match status" value="1"/>
</dbReference>
<dbReference type="PANTHER" id="PTHR46278:SF2">
    <property type="entry name" value="ASPARTATE-SEMIALDEHYDE DEHYDROGENASE"/>
    <property type="match status" value="1"/>
</dbReference>
<dbReference type="PANTHER" id="PTHR46278">
    <property type="entry name" value="DEHYDROGENASE, PUTATIVE-RELATED"/>
    <property type="match status" value="1"/>
</dbReference>
<dbReference type="Pfam" id="PF01118">
    <property type="entry name" value="Semialdhyde_dh"/>
    <property type="match status" value="1"/>
</dbReference>
<dbReference type="Pfam" id="PF02774">
    <property type="entry name" value="Semialdhyde_dhC"/>
    <property type="match status" value="1"/>
</dbReference>
<dbReference type="PIRSF" id="PIRSF000148">
    <property type="entry name" value="ASA_dh"/>
    <property type="match status" value="1"/>
</dbReference>
<dbReference type="SMART" id="SM00859">
    <property type="entry name" value="Semialdhyde_dh"/>
    <property type="match status" value="1"/>
</dbReference>
<dbReference type="SUPFAM" id="SSF55347">
    <property type="entry name" value="Glyceraldehyde-3-phosphate dehydrogenase-like, C-terminal domain"/>
    <property type="match status" value="1"/>
</dbReference>
<dbReference type="SUPFAM" id="SSF51735">
    <property type="entry name" value="NAD(P)-binding Rossmann-fold domains"/>
    <property type="match status" value="1"/>
</dbReference>
<dbReference type="PROSITE" id="PS01103">
    <property type="entry name" value="ASD"/>
    <property type="match status" value="1"/>
</dbReference>
<evidence type="ECO:0000255" key="1">
    <source>
        <dbReference type="HAMAP-Rule" id="MF_02121"/>
    </source>
</evidence>
<evidence type="ECO:0000305" key="2"/>
<keyword id="KW-0028">Amino-acid biosynthesis</keyword>
<keyword id="KW-0220">Diaminopimelate biosynthesis</keyword>
<keyword id="KW-0457">Lysine biosynthesis</keyword>
<keyword id="KW-0486">Methionine biosynthesis</keyword>
<keyword id="KW-0521">NADP</keyword>
<keyword id="KW-0560">Oxidoreductase</keyword>
<keyword id="KW-1185">Reference proteome</keyword>
<keyword id="KW-0791">Threonine biosynthesis</keyword>
<comment type="function">
    <text evidence="1">Catalyzes the NADPH-dependent formation of L-aspartate-semialdehyde (L-ASA) by the reductive dephosphorylation of L-aspartyl-4-phosphate.</text>
</comment>
<comment type="catalytic activity">
    <reaction evidence="1">
        <text>L-aspartate 4-semialdehyde + phosphate + NADP(+) = 4-phospho-L-aspartate + NADPH + H(+)</text>
        <dbReference type="Rhea" id="RHEA:24284"/>
        <dbReference type="ChEBI" id="CHEBI:15378"/>
        <dbReference type="ChEBI" id="CHEBI:43474"/>
        <dbReference type="ChEBI" id="CHEBI:57535"/>
        <dbReference type="ChEBI" id="CHEBI:57783"/>
        <dbReference type="ChEBI" id="CHEBI:58349"/>
        <dbReference type="ChEBI" id="CHEBI:537519"/>
        <dbReference type="EC" id="1.2.1.11"/>
    </reaction>
</comment>
<comment type="pathway">
    <text evidence="1">Amino-acid biosynthesis; L-lysine biosynthesis via DAP pathway; (S)-tetrahydrodipicolinate from L-aspartate: step 2/4.</text>
</comment>
<comment type="pathway">
    <text evidence="1">Amino-acid biosynthesis; L-methionine biosynthesis via de novo pathway; L-homoserine from L-aspartate: step 2/3.</text>
</comment>
<comment type="pathway">
    <text evidence="1">Amino-acid biosynthesis; L-threonine biosynthesis; L-threonine from L-aspartate: step 2/5.</text>
</comment>
<comment type="subunit">
    <text evidence="1">Homodimer.</text>
</comment>
<comment type="similarity">
    <text evidence="1">Belongs to the aspartate-semialdehyde dehydrogenase family.</text>
</comment>
<protein>
    <recommendedName>
        <fullName evidence="1">Aspartate-semialdehyde dehydrogenase</fullName>
        <shortName evidence="1">ASA dehydrogenase</shortName>
        <shortName evidence="1">ASADH</shortName>
        <ecNumber evidence="1">1.2.1.11</ecNumber>
    </recommendedName>
    <alternativeName>
        <fullName evidence="1">Aspartate-beta-semialdehyde dehydrogenase</fullName>
    </alternativeName>
</protein>
<gene>
    <name evidence="1" type="primary">asd</name>
    <name type="ordered locus">Cj1023c</name>
</gene>